<sequence>MGHRFLRGFLRVLLPPLPLRSPHLKLSLEPVAPSKRPRSHLMAPPRIGTHNGTFHCDEALACALLRLLPEYREAEIVRTRDPEKLAACDIVVDVGGEYDPQRHRYDHHQRSFTETMSSLSPGKPWQTKLSSAGLIYLHFGHKLLAQLLGTSEEDGMVGTLYDKMYENFVEEVDAVDNGISQWEEGEPRYLLTTTLSARVARLNPTWNQPNQDTEAGFKRAMDLVREEFLQRLDFYQNSWLPARTLVEEALAKRFQVDPSGEIIELEKGGCPWKEHLYQLELGLSPAGTIAFVIYTDQAGQWRVQCVPKEPHSFQSRLPLLEPWRGLRDEALDQISGIPGCIFVHASGFIGGHRTREGALSMARATLAQRPAPTPAPNPMVQ</sequence>
<proteinExistence type="evidence at transcript level"/>
<name>MYG1_BOVIN</name>
<accession>Q58DG1</accession>
<reference key="1">
    <citation type="journal article" date="2005" name="BMC Genomics">
        <title>Characterization of 954 bovine full-CDS cDNA sequences.</title>
        <authorList>
            <person name="Harhay G.P."/>
            <person name="Sonstegard T.S."/>
            <person name="Keele J.W."/>
            <person name="Heaton M.P."/>
            <person name="Clawson M.L."/>
            <person name="Snelling W.M."/>
            <person name="Wiedmann R.T."/>
            <person name="Van Tassell C.P."/>
            <person name="Smith T.P.L."/>
        </authorList>
    </citation>
    <scope>NUCLEOTIDE SEQUENCE [LARGE SCALE MRNA]</scope>
</reference>
<reference key="2">
    <citation type="submission" date="2005-12" db="EMBL/GenBank/DDBJ databases">
        <authorList>
            <consortium name="NIH - Mammalian Gene Collection (MGC) project"/>
        </authorList>
    </citation>
    <scope>NUCLEOTIDE SEQUENCE [LARGE SCALE MRNA]</scope>
    <source>
        <strain>Crossbred X Angus</strain>
        <tissue>Liver</tissue>
    </source>
</reference>
<organism>
    <name type="scientific">Bos taurus</name>
    <name type="common">Bovine</name>
    <dbReference type="NCBI Taxonomy" id="9913"/>
    <lineage>
        <taxon>Eukaryota</taxon>
        <taxon>Metazoa</taxon>
        <taxon>Chordata</taxon>
        <taxon>Craniata</taxon>
        <taxon>Vertebrata</taxon>
        <taxon>Euteleostomi</taxon>
        <taxon>Mammalia</taxon>
        <taxon>Eutheria</taxon>
        <taxon>Laurasiatheria</taxon>
        <taxon>Artiodactyla</taxon>
        <taxon>Ruminantia</taxon>
        <taxon>Pecora</taxon>
        <taxon>Bovidae</taxon>
        <taxon>Bovinae</taxon>
        <taxon>Bos</taxon>
    </lineage>
</organism>
<dbReference type="EC" id="3.1.-.-" evidence="1"/>
<dbReference type="EMBL" id="BT021616">
    <property type="protein sequence ID" value="AAX46463.1"/>
    <property type="molecule type" value="mRNA"/>
</dbReference>
<dbReference type="EMBL" id="BT021636">
    <property type="protein sequence ID" value="AAX46483.1"/>
    <property type="molecule type" value="mRNA"/>
</dbReference>
<dbReference type="EMBL" id="BC111153">
    <property type="protein sequence ID" value="AAI11154.1"/>
    <property type="molecule type" value="mRNA"/>
</dbReference>
<dbReference type="FunCoup" id="Q58DG1">
    <property type="interactions" value="4680"/>
</dbReference>
<dbReference type="STRING" id="9913.ENSBTAP00000026875"/>
<dbReference type="PaxDb" id="9913-ENSBTAP00000026875"/>
<dbReference type="VEuPathDB" id="HostDB:ENSBTAG00000020177"/>
<dbReference type="eggNOG" id="KOG2948">
    <property type="taxonomic scope" value="Eukaryota"/>
</dbReference>
<dbReference type="HOGENOM" id="CLU_051576_0_0_1"/>
<dbReference type="InParanoid" id="Q58DG1"/>
<dbReference type="OMA" id="FHCDEVV"/>
<dbReference type="TreeFam" id="TF313313"/>
<dbReference type="Proteomes" id="UP000009136">
    <property type="component" value="Chromosome 5"/>
</dbReference>
<dbReference type="Bgee" id="ENSBTAG00000020177">
    <property type="expression patterns" value="Expressed in laryngeal cartilage and 106 other cell types or tissues"/>
</dbReference>
<dbReference type="GO" id="GO:0005737">
    <property type="term" value="C:cytoplasm"/>
    <property type="evidence" value="ECO:0000318"/>
    <property type="project" value="GO_Central"/>
</dbReference>
<dbReference type="GO" id="GO:0005759">
    <property type="term" value="C:mitochondrial matrix"/>
    <property type="evidence" value="ECO:0007669"/>
    <property type="project" value="UniProtKB-SubCell"/>
</dbReference>
<dbReference type="GO" id="GO:0005739">
    <property type="term" value="C:mitochondrion"/>
    <property type="evidence" value="ECO:0000250"/>
    <property type="project" value="UniProtKB"/>
</dbReference>
<dbReference type="GO" id="GO:0005730">
    <property type="term" value="C:nucleolus"/>
    <property type="evidence" value="ECO:0007669"/>
    <property type="project" value="UniProtKB-SubCell"/>
</dbReference>
<dbReference type="GO" id="GO:0005654">
    <property type="term" value="C:nucleoplasm"/>
    <property type="evidence" value="ECO:0007669"/>
    <property type="project" value="UniProtKB-SubCell"/>
</dbReference>
<dbReference type="GO" id="GO:0005634">
    <property type="term" value="C:nucleus"/>
    <property type="evidence" value="ECO:0000250"/>
    <property type="project" value="UniProtKB"/>
</dbReference>
<dbReference type="GO" id="GO:0004518">
    <property type="term" value="F:nuclease activity"/>
    <property type="evidence" value="ECO:0007669"/>
    <property type="project" value="UniProtKB-KW"/>
</dbReference>
<dbReference type="InterPro" id="IPR003226">
    <property type="entry name" value="MYG1_exonuclease"/>
</dbReference>
<dbReference type="PANTHER" id="PTHR11215">
    <property type="entry name" value="METAL DEPENDENT HYDROLASE - RELATED"/>
    <property type="match status" value="1"/>
</dbReference>
<dbReference type="PANTHER" id="PTHR11215:SF1">
    <property type="entry name" value="MYG1 EXONUCLEASE"/>
    <property type="match status" value="1"/>
</dbReference>
<dbReference type="Pfam" id="PF03690">
    <property type="entry name" value="MYG1_exonuc"/>
    <property type="match status" value="1"/>
</dbReference>
<keyword id="KW-0007">Acetylation</keyword>
<keyword id="KW-0378">Hydrolase</keyword>
<keyword id="KW-0496">Mitochondrion</keyword>
<keyword id="KW-0540">Nuclease</keyword>
<keyword id="KW-0539">Nucleus</keyword>
<keyword id="KW-0597">Phosphoprotein</keyword>
<keyword id="KW-1185">Reference proteome</keyword>
<keyword id="KW-0809">Transit peptide</keyword>
<feature type="transit peptide" description="Mitochondrion" evidence="3">
    <location>
        <begin position="1"/>
        <end position="47"/>
    </location>
</feature>
<feature type="chain" id="PRO_0000245579" description="MYG1 exonuclease">
    <location>
        <begin position="48"/>
        <end position="381"/>
    </location>
</feature>
<feature type="modified residue" description="Phosphoserine" evidence="1">
    <location>
        <position position="120"/>
    </location>
</feature>
<feature type="modified residue" description="N6-acetyllysine" evidence="1">
    <location>
        <position position="267"/>
    </location>
</feature>
<feature type="modified residue" description="N6-acetyllysine" evidence="2">
    <location>
        <position position="273"/>
    </location>
</feature>
<comment type="function">
    <text evidence="1">3'-5' RNA exonuclease which cleaves in situ on specific transcripts in both nucleus and mitochondrion. Involved in regulating spatially segregated organellar RNA processing, acts as a coordinator of nucleo-mitochondrial crosstalk. In nucleolus, processes pre-ribosomal RNA involved in ribosome assembly and alters cytoplasmic translation. In mitochondrial matrix, processes 3'-termini of the mito-ribosomal and messenger RNAs and controls translation of mitochondrial proteins.</text>
</comment>
<comment type="subcellular location">
    <subcellularLocation>
        <location evidence="1">Nucleus</location>
        <location evidence="1">Nucleoplasm</location>
    </subcellularLocation>
    <subcellularLocation>
        <location evidence="1">Mitochondrion matrix</location>
    </subcellularLocation>
    <subcellularLocation>
        <location evidence="2">Nucleus</location>
        <location evidence="2">Nucleolus</location>
    </subcellularLocation>
</comment>
<comment type="similarity">
    <text evidence="4">Belongs to the MYG1 family.</text>
</comment>
<protein>
    <recommendedName>
        <fullName evidence="4">MYG1 exonuclease</fullName>
        <ecNumber evidence="1">3.1.-.-</ecNumber>
    </recommendedName>
</protein>
<evidence type="ECO:0000250" key="1">
    <source>
        <dbReference type="UniProtKB" id="Q9HB07"/>
    </source>
</evidence>
<evidence type="ECO:0000250" key="2">
    <source>
        <dbReference type="UniProtKB" id="Q9JK81"/>
    </source>
</evidence>
<evidence type="ECO:0000255" key="3"/>
<evidence type="ECO:0000305" key="4"/>
<gene>
    <name type="primary">MYG1</name>
</gene>